<proteinExistence type="inferred from homology"/>
<keyword id="KW-1185">Reference proteome</keyword>
<keyword id="KW-0687">Ribonucleoprotein</keyword>
<keyword id="KW-0689">Ribosomal protein</keyword>
<keyword id="KW-0694">RNA-binding</keyword>
<keyword id="KW-0699">rRNA-binding</keyword>
<protein>
    <recommendedName>
        <fullName evidence="1">Small ribosomal subunit protein uS7</fullName>
    </recommendedName>
    <alternativeName>
        <fullName evidence="2">30S ribosomal protein S7</fullName>
    </alternativeName>
</protein>
<comment type="function">
    <text evidence="1">One of the primary rRNA binding proteins, it binds directly to 16S rRNA where it nucleates assembly of the head domain of the 30S subunit. Is located at the subunit interface close to the decoding center.</text>
</comment>
<comment type="subunit">
    <text>Part of the 30S ribosomal subunit.</text>
</comment>
<comment type="similarity">
    <text evidence="1">Belongs to the universal ribosomal protein uS7 family.</text>
</comment>
<reference key="1">
    <citation type="journal article" date="1997" name="Nature">
        <title>The complete genome sequence of the hyperthermophilic, sulphate-reducing archaeon Archaeoglobus fulgidus.</title>
        <authorList>
            <person name="Klenk H.-P."/>
            <person name="Clayton R.A."/>
            <person name="Tomb J.-F."/>
            <person name="White O."/>
            <person name="Nelson K.E."/>
            <person name="Ketchum K.A."/>
            <person name="Dodson R.J."/>
            <person name="Gwinn M.L."/>
            <person name="Hickey E.K."/>
            <person name="Peterson J.D."/>
            <person name="Richardson D.L."/>
            <person name="Kerlavage A.R."/>
            <person name="Graham D.E."/>
            <person name="Kyrpides N.C."/>
            <person name="Fleischmann R.D."/>
            <person name="Quackenbush J."/>
            <person name="Lee N.H."/>
            <person name="Sutton G.G."/>
            <person name="Gill S.R."/>
            <person name="Kirkness E.F."/>
            <person name="Dougherty B.A."/>
            <person name="McKenney K."/>
            <person name="Adams M.D."/>
            <person name="Loftus B.J."/>
            <person name="Peterson S.N."/>
            <person name="Reich C.I."/>
            <person name="McNeil L.K."/>
            <person name="Badger J.H."/>
            <person name="Glodek A."/>
            <person name="Zhou L."/>
            <person name="Overbeek R."/>
            <person name="Gocayne J.D."/>
            <person name="Weidman J.F."/>
            <person name="McDonald L.A."/>
            <person name="Utterback T.R."/>
            <person name="Cotton M.D."/>
            <person name="Spriggs T."/>
            <person name="Artiach P."/>
            <person name="Kaine B.P."/>
            <person name="Sykes S.M."/>
            <person name="Sadow P.W."/>
            <person name="D'Andrea K.P."/>
            <person name="Bowman C."/>
            <person name="Fujii C."/>
            <person name="Garland S.A."/>
            <person name="Mason T.M."/>
            <person name="Olsen G.J."/>
            <person name="Fraser C.M."/>
            <person name="Smith H.O."/>
            <person name="Woese C.R."/>
            <person name="Venter J.C."/>
        </authorList>
    </citation>
    <scope>NUCLEOTIDE SEQUENCE [LARGE SCALE GENOMIC DNA]</scope>
    <source>
        <strain>ATCC 49558 / DSM 4304 / JCM 9628 / NBRC 100126 / VC-16</strain>
    </source>
</reference>
<name>RS7_ARCFU</name>
<evidence type="ECO:0000255" key="1">
    <source>
        <dbReference type="HAMAP-Rule" id="MF_00480"/>
    </source>
</evidence>
<evidence type="ECO:0000305" key="2"/>
<organism>
    <name type="scientific">Archaeoglobus fulgidus (strain ATCC 49558 / DSM 4304 / JCM 9628 / NBRC 100126 / VC-16)</name>
    <dbReference type="NCBI Taxonomy" id="224325"/>
    <lineage>
        <taxon>Archaea</taxon>
        <taxon>Methanobacteriati</taxon>
        <taxon>Methanobacteriota</taxon>
        <taxon>Archaeoglobi</taxon>
        <taxon>Archaeoglobales</taxon>
        <taxon>Archaeoglobaceae</taxon>
        <taxon>Archaeoglobus</taxon>
    </lineage>
</organism>
<accession>O28386</accession>
<feature type="chain" id="PRO_0000124392" description="Small ribosomal subunit protein uS7">
    <location>
        <begin position="1"/>
        <end position="194"/>
    </location>
</feature>
<sequence>MKYGFTKEELLVFGKYDPSEVQISDPALESYICLEPKYVPHNHGRHANVPFAKQKVFIVERLINKVMRKGHNTGKKILAYNIVKEAFEIIEKKTKKNPIQVLVDAIINAGPREEVVRLKYGGIAVPKAVDTSSSRRVDIALRNIAEGARRAAFKSKRSIAQCLADEIIAAANNESRSFAVAKKEEVERVAKSAR</sequence>
<dbReference type="EMBL" id="AE000782">
    <property type="protein sequence ID" value="AAB89361.1"/>
    <property type="molecule type" value="Genomic_DNA"/>
</dbReference>
<dbReference type="PIR" id="D69486">
    <property type="entry name" value="D69486"/>
</dbReference>
<dbReference type="SMR" id="O28386"/>
<dbReference type="STRING" id="224325.AF_1893"/>
<dbReference type="PaxDb" id="224325-AF_1893"/>
<dbReference type="EnsemblBacteria" id="AAB89361">
    <property type="protein sequence ID" value="AAB89361"/>
    <property type="gene ID" value="AF_1893"/>
</dbReference>
<dbReference type="KEGG" id="afu:AF_1893"/>
<dbReference type="eggNOG" id="arCOG04254">
    <property type="taxonomic scope" value="Archaea"/>
</dbReference>
<dbReference type="HOGENOM" id="CLU_063975_0_0_2"/>
<dbReference type="OrthoDB" id="45346at2157"/>
<dbReference type="PhylomeDB" id="O28386"/>
<dbReference type="Proteomes" id="UP000002199">
    <property type="component" value="Chromosome"/>
</dbReference>
<dbReference type="GO" id="GO:0015935">
    <property type="term" value="C:small ribosomal subunit"/>
    <property type="evidence" value="ECO:0007669"/>
    <property type="project" value="InterPro"/>
</dbReference>
<dbReference type="GO" id="GO:0019843">
    <property type="term" value="F:rRNA binding"/>
    <property type="evidence" value="ECO:0007669"/>
    <property type="project" value="UniProtKB-UniRule"/>
</dbReference>
<dbReference type="GO" id="GO:0003735">
    <property type="term" value="F:structural constituent of ribosome"/>
    <property type="evidence" value="ECO:0007669"/>
    <property type="project" value="InterPro"/>
</dbReference>
<dbReference type="GO" id="GO:0006412">
    <property type="term" value="P:translation"/>
    <property type="evidence" value="ECO:0007669"/>
    <property type="project" value="UniProtKB-UniRule"/>
</dbReference>
<dbReference type="CDD" id="cd14867">
    <property type="entry name" value="uS7_Eukaryote"/>
    <property type="match status" value="1"/>
</dbReference>
<dbReference type="Gene3D" id="1.10.455.10">
    <property type="entry name" value="Ribosomal protein S7 domain"/>
    <property type="match status" value="1"/>
</dbReference>
<dbReference type="HAMAP" id="MF_00480_A">
    <property type="entry name" value="Ribosomal_uS7_A"/>
    <property type="match status" value="1"/>
</dbReference>
<dbReference type="InterPro" id="IPR000235">
    <property type="entry name" value="Ribosomal_uS7"/>
</dbReference>
<dbReference type="InterPro" id="IPR026018">
    <property type="entry name" value="Ribosomal_uS7_arc"/>
</dbReference>
<dbReference type="InterPro" id="IPR020606">
    <property type="entry name" value="Ribosomal_uS7_CS"/>
</dbReference>
<dbReference type="InterPro" id="IPR023798">
    <property type="entry name" value="Ribosomal_uS7_dom"/>
</dbReference>
<dbReference type="InterPro" id="IPR036823">
    <property type="entry name" value="Ribosomal_uS7_dom_sf"/>
</dbReference>
<dbReference type="InterPro" id="IPR005716">
    <property type="entry name" value="Ribosomal_uS7_euk/arc"/>
</dbReference>
<dbReference type="NCBIfam" id="NF003106">
    <property type="entry name" value="PRK04027.1"/>
    <property type="match status" value="1"/>
</dbReference>
<dbReference type="NCBIfam" id="TIGR01028">
    <property type="entry name" value="uS7_euk_arch"/>
    <property type="match status" value="1"/>
</dbReference>
<dbReference type="PANTHER" id="PTHR11205">
    <property type="entry name" value="RIBOSOMAL PROTEIN S7"/>
    <property type="match status" value="1"/>
</dbReference>
<dbReference type="Pfam" id="PF00177">
    <property type="entry name" value="Ribosomal_S7"/>
    <property type="match status" value="1"/>
</dbReference>
<dbReference type="PIRSF" id="PIRSF002122">
    <property type="entry name" value="RPS7p_RPS7a_RPS5e_RPS7o"/>
    <property type="match status" value="1"/>
</dbReference>
<dbReference type="SUPFAM" id="SSF47973">
    <property type="entry name" value="Ribosomal protein S7"/>
    <property type="match status" value="1"/>
</dbReference>
<dbReference type="PROSITE" id="PS00052">
    <property type="entry name" value="RIBOSOMAL_S7"/>
    <property type="match status" value="1"/>
</dbReference>
<gene>
    <name evidence="1" type="primary">rps7</name>
    <name type="ordered locus">AF_1893</name>
</gene>